<keyword id="KW-1003">Cell membrane</keyword>
<keyword id="KW-0472">Membrane</keyword>
<keyword id="KW-0812">Transmembrane</keyword>
<keyword id="KW-1133">Transmembrane helix</keyword>
<reference key="1">
    <citation type="journal article" date="2007" name="PLoS ONE">
        <title>Molecular correlates of host specialization in Staphylococcus aureus.</title>
        <authorList>
            <person name="Herron-Olson L."/>
            <person name="Fitzgerald J.R."/>
            <person name="Musser J.M."/>
            <person name="Kapur V."/>
        </authorList>
    </citation>
    <scope>NUCLEOTIDE SEQUENCE [LARGE SCALE GENOMIC DNA]</scope>
    <source>
        <strain>bovine RF122 / ET3-1</strain>
    </source>
</reference>
<gene>
    <name type="ordered locus">SAB1599c</name>
</gene>
<feature type="chain" id="PRO_0000299434" description="UPF0478 protein SAB1599c">
    <location>
        <begin position="1"/>
        <end position="163"/>
    </location>
</feature>
<feature type="transmembrane region" description="Helical" evidence="1">
    <location>
        <begin position="7"/>
        <end position="27"/>
    </location>
</feature>
<accession>Q2YTJ7</accession>
<dbReference type="EMBL" id="AJ938182">
    <property type="protein sequence ID" value="CAI81288.1"/>
    <property type="molecule type" value="Genomic_DNA"/>
</dbReference>
<dbReference type="RefSeq" id="WP_000383814.1">
    <property type="nucleotide sequence ID" value="NC_007622.1"/>
</dbReference>
<dbReference type="SMR" id="Q2YTJ7"/>
<dbReference type="KEGG" id="sab:SAB1599c"/>
<dbReference type="HOGENOM" id="CLU_115870_0_0_9"/>
<dbReference type="GO" id="GO:0005886">
    <property type="term" value="C:plasma membrane"/>
    <property type="evidence" value="ECO:0007669"/>
    <property type="project" value="UniProtKB-SubCell"/>
</dbReference>
<dbReference type="Gene3D" id="1.10.287.950">
    <property type="entry name" value="Methyl-accepting chemotaxis protein"/>
    <property type="match status" value="1"/>
</dbReference>
<dbReference type="InterPro" id="IPR009293">
    <property type="entry name" value="UPF0478"/>
</dbReference>
<dbReference type="PANTHER" id="PTHR40070">
    <property type="entry name" value="UPF0478 PROTEIN YTXG"/>
    <property type="match status" value="1"/>
</dbReference>
<dbReference type="PANTHER" id="PTHR40070:SF1">
    <property type="entry name" value="UPF0478 PROTEIN YTXG"/>
    <property type="match status" value="1"/>
</dbReference>
<dbReference type="Pfam" id="PF06103">
    <property type="entry name" value="DUF948"/>
    <property type="match status" value="1"/>
</dbReference>
<dbReference type="SUPFAM" id="SSF58104">
    <property type="entry name" value="Methyl-accepting chemotaxis protein (MCP) signaling domain"/>
    <property type="match status" value="1"/>
</dbReference>
<sequence length="163" mass="18002">MDWILPIAGIIAAIAFLILCIGIVAVLNSVKKNLDYVAKTLDGVEGQVQGITRETTDLLHKVNRLTEDIQGKVDRLNSVVDAVKGIGDSVQTLNSSVDRVTNSITHNISQNEDKISQVVQWSNVAMEIADKWQNRHYRRGSANYKANNVATDANHSYTSRVDK</sequence>
<protein>
    <recommendedName>
        <fullName>UPF0478 protein SAB1599c</fullName>
    </recommendedName>
</protein>
<organism>
    <name type="scientific">Staphylococcus aureus (strain bovine RF122 / ET3-1)</name>
    <dbReference type="NCBI Taxonomy" id="273036"/>
    <lineage>
        <taxon>Bacteria</taxon>
        <taxon>Bacillati</taxon>
        <taxon>Bacillota</taxon>
        <taxon>Bacilli</taxon>
        <taxon>Bacillales</taxon>
        <taxon>Staphylococcaceae</taxon>
        <taxon>Staphylococcus</taxon>
    </lineage>
</organism>
<proteinExistence type="inferred from homology"/>
<evidence type="ECO:0000255" key="1"/>
<evidence type="ECO:0000305" key="2"/>
<comment type="subcellular location">
    <subcellularLocation>
        <location evidence="2">Cell membrane</location>
        <topology evidence="2">Single-pass membrane protein</topology>
    </subcellularLocation>
</comment>
<comment type="similarity">
    <text evidence="2">Belongs to the UPF0478 family.</text>
</comment>
<name>Y1599_STAAB</name>